<reference key="1">
    <citation type="journal article" date="1982" name="Biochemistry">
        <title>Primary structure of monkey osteocalcin.</title>
        <authorList>
            <person name="Hauschka P.V."/>
            <person name="Carr S.A."/>
            <person name="Biemann K."/>
        </authorList>
    </citation>
    <scope>PROTEIN SEQUENCE</scope>
    <scope>HYDROXYLATION AT PRO-9</scope>
    <scope>GAMMA-CARBOXYGLUTAMATION AT GLU-17; GLU-21 AND GLU-24</scope>
</reference>
<protein>
    <recommendedName>
        <fullName>Osteocalcin</fullName>
    </recommendedName>
    <alternativeName>
        <fullName>Bone Gla protein</fullName>
        <shortName>BGP</shortName>
    </alternativeName>
    <alternativeName>
        <fullName>Gamma-carboxyglutamic acid-containing protein</fullName>
    </alternativeName>
</protein>
<gene>
    <name type="primary">BGLAP</name>
</gene>
<name>OSTCN_MACFA</name>
<evidence type="ECO:0000250" key="1">
    <source>
        <dbReference type="UniProtKB" id="P02820"/>
    </source>
</evidence>
<evidence type="ECO:0000250" key="2">
    <source>
        <dbReference type="UniProtKB" id="P86546"/>
    </source>
</evidence>
<evidence type="ECO:0000255" key="3">
    <source>
        <dbReference type="PROSITE-ProRule" id="PRU00463"/>
    </source>
</evidence>
<evidence type="ECO:0000269" key="4">
    <source>
    </source>
</evidence>
<evidence type="ECO:0000305" key="5"/>
<accession>P02819</accession>
<proteinExistence type="evidence at protein level"/>
<organism>
    <name type="scientific">Macaca fascicularis</name>
    <name type="common">Crab-eating macaque</name>
    <name type="synonym">Cynomolgus monkey</name>
    <dbReference type="NCBI Taxonomy" id="9541"/>
    <lineage>
        <taxon>Eukaryota</taxon>
        <taxon>Metazoa</taxon>
        <taxon>Chordata</taxon>
        <taxon>Craniata</taxon>
        <taxon>Vertebrata</taxon>
        <taxon>Euteleostomi</taxon>
        <taxon>Mammalia</taxon>
        <taxon>Eutheria</taxon>
        <taxon>Euarchontoglires</taxon>
        <taxon>Primates</taxon>
        <taxon>Haplorrhini</taxon>
        <taxon>Catarrhini</taxon>
        <taxon>Cercopithecidae</taxon>
        <taxon>Cercopithecinae</taxon>
        <taxon>Macaca</taxon>
    </lineage>
</organism>
<dbReference type="PIR" id="A03302">
    <property type="entry name" value="GEMKI"/>
</dbReference>
<dbReference type="SMR" id="P02819"/>
<dbReference type="STRING" id="9541.ENSMFAP00000002148"/>
<dbReference type="eggNOG" id="ENOG502S85I">
    <property type="taxonomic scope" value="Eukaryota"/>
</dbReference>
<dbReference type="Proteomes" id="UP000233100">
    <property type="component" value="Unplaced"/>
</dbReference>
<dbReference type="GO" id="GO:0005737">
    <property type="term" value="C:cytoplasm"/>
    <property type="evidence" value="ECO:0000250"/>
    <property type="project" value="UniProtKB"/>
</dbReference>
<dbReference type="GO" id="GO:0005576">
    <property type="term" value="C:extracellular region"/>
    <property type="evidence" value="ECO:0007669"/>
    <property type="project" value="UniProtKB-SubCell"/>
</dbReference>
<dbReference type="GO" id="GO:0005509">
    <property type="term" value="F:calcium ion binding"/>
    <property type="evidence" value="ECO:0000303"/>
    <property type="project" value="UniProtKB"/>
</dbReference>
<dbReference type="GO" id="GO:0005179">
    <property type="term" value="F:hormone activity"/>
    <property type="evidence" value="ECO:0000250"/>
    <property type="project" value="UniProtKB"/>
</dbReference>
<dbReference type="GO" id="GO:0046848">
    <property type="term" value="F:hydroxyapatite binding"/>
    <property type="evidence" value="ECO:0007669"/>
    <property type="project" value="TreeGrafter"/>
</dbReference>
<dbReference type="GO" id="GO:0008147">
    <property type="term" value="F:structural constituent of bone"/>
    <property type="evidence" value="ECO:0000250"/>
    <property type="project" value="UniProtKB"/>
</dbReference>
<dbReference type="GO" id="GO:0031214">
    <property type="term" value="P:biomineral tissue development"/>
    <property type="evidence" value="ECO:0007669"/>
    <property type="project" value="UniProtKB-KW"/>
</dbReference>
<dbReference type="GO" id="GO:0060348">
    <property type="term" value="P:bone development"/>
    <property type="evidence" value="ECO:0007669"/>
    <property type="project" value="InterPro"/>
</dbReference>
<dbReference type="GO" id="GO:0007420">
    <property type="term" value="P:brain development"/>
    <property type="evidence" value="ECO:0000250"/>
    <property type="project" value="UniProtKB"/>
</dbReference>
<dbReference type="GO" id="GO:0032869">
    <property type="term" value="P:cellular response to insulin stimulus"/>
    <property type="evidence" value="ECO:0000250"/>
    <property type="project" value="UniProtKB"/>
</dbReference>
<dbReference type="GO" id="GO:0050890">
    <property type="term" value="P:cognition"/>
    <property type="evidence" value="ECO:0000250"/>
    <property type="project" value="UniProtKB"/>
</dbReference>
<dbReference type="GO" id="GO:0042593">
    <property type="term" value="P:glucose homeostasis"/>
    <property type="evidence" value="ECO:0000250"/>
    <property type="project" value="UniProtKB"/>
</dbReference>
<dbReference type="GO" id="GO:0007611">
    <property type="term" value="P:learning or memory"/>
    <property type="evidence" value="ECO:0000250"/>
    <property type="project" value="UniProtKB"/>
</dbReference>
<dbReference type="GO" id="GO:1903011">
    <property type="term" value="P:negative regulation of bone development"/>
    <property type="evidence" value="ECO:0000250"/>
    <property type="project" value="UniProtKB"/>
</dbReference>
<dbReference type="GO" id="GO:0001649">
    <property type="term" value="P:osteoblast differentiation"/>
    <property type="evidence" value="ECO:0007669"/>
    <property type="project" value="TreeGrafter"/>
</dbReference>
<dbReference type="GO" id="GO:0001956">
    <property type="term" value="P:positive regulation of neurotransmitter secretion"/>
    <property type="evidence" value="ECO:0000250"/>
    <property type="project" value="UniProtKB"/>
</dbReference>
<dbReference type="GO" id="GO:0030500">
    <property type="term" value="P:regulation of bone mineralization"/>
    <property type="evidence" value="ECO:0007669"/>
    <property type="project" value="InterPro"/>
</dbReference>
<dbReference type="GO" id="GO:1900076">
    <property type="term" value="P:regulation of cellular response to insulin stimulus"/>
    <property type="evidence" value="ECO:0007669"/>
    <property type="project" value="InterPro"/>
</dbReference>
<dbReference type="GO" id="GO:2000224">
    <property type="term" value="P:regulation of testosterone biosynthetic process"/>
    <property type="evidence" value="ECO:0000250"/>
    <property type="project" value="UniProtKB"/>
</dbReference>
<dbReference type="GO" id="GO:0032571">
    <property type="term" value="P:response to vitamin K"/>
    <property type="evidence" value="ECO:0007669"/>
    <property type="project" value="InterPro"/>
</dbReference>
<dbReference type="GO" id="GO:0044342">
    <property type="term" value="P:type B pancreatic cell proliferation"/>
    <property type="evidence" value="ECO:0000250"/>
    <property type="project" value="UniProtKB"/>
</dbReference>
<dbReference type="InterPro" id="IPR035972">
    <property type="entry name" value="GLA-like_dom_SF"/>
</dbReference>
<dbReference type="InterPro" id="IPR000294">
    <property type="entry name" value="GLA_domain"/>
</dbReference>
<dbReference type="InterPro" id="IPR039176">
    <property type="entry name" value="Osteocalcin"/>
</dbReference>
<dbReference type="InterPro" id="IPR002384">
    <property type="entry name" value="Osteocalcin/MGP"/>
</dbReference>
<dbReference type="PANTHER" id="PTHR14235">
    <property type="entry name" value="OSTEOCALCIN"/>
    <property type="match status" value="1"/>
</dbReference>
<dbReference type="PANTHER" id="PTHR14235:SF0">
    <property type="entry name" value="OSTEOCALCIN"/>
    <property type="match status" value="1"/>
</dbReference>
<dbReference type="PRINTS" id="PR00002">
    <property type="entry name" value="GLABONE"/>
</dbReference>
<dbReference type="SMART" id="SM00069">
    <property type="entry name" value="GLA"/>
    <property type="match status" value="1"/>
</dbReference>
<dbReference type="SUPFAM" id="SSF57630">
    <property type="entry name" value="GLA-domain"/>
    <property type="match status" value="1"/>
</dbReference>
<dbReference type="PROSITE" id="PS00011">
    <property type="entry name" value="GLA_1"/>
    <property type="match status" value="1"/>
</dbReference>
<dbReference type="PROSITE" id="PS50998">
    <property type="entry name" value="GLA_2"/>
    <property type="match status" value="1"/>
</dbReference>
<comment type="function">
    <text evidence="2">The carboxylated form is one of the main organic components of the bone matrix, which constitutes 1-2% of the total bone protein: it acts as a negative regulator of bone formation and is required to limit bone formation without impairing bone resorption or mineralization. The carboxylated form binds strongly to apatite and calcium.</text>
</comment>
<comment type="function">
    <text evidence="2">The uncarboxylated form acts as a hormone secreted by osteoblasts, which regulates different cellular processes, such as energy metabolism, male fertility and brain development. Regulates of energy metabolism by acting as a hormone favoring pancreatic beta-cell proliferation, insulin secretion and sensitivity and energy expenditure. Uncarboxylated osteocalcin hormone also promotes testosterone production in the testes: acts as a ligand for G protein-coupled receptor GPRC6A at the surface of Leydig cells, initiating a signaling response that promotes the expression of enzymes required for testosterone synthesis in a CREB-dependent manner. Also acts as a regulator of brain development: osteocalcin hormone crosses the blood-brain barrier and acts as a ligand for GPR158 on neurons, initiating a signaling response that prevents neuronal apoptosis in the hippocampus, favors the synthesis of all monoamine neurotransmitters and inhibits that of gamma-aminobutyric acid (GABA). Osteocalcin also crosses the placenta during pregnancy and maternal osteocalcin is required for fetal brain development.</text>
</comment>
<comment type="subcellular location">
    <subcellularLocation>
        <location evidence="4">Secreted</location>
    </subcellularLocation>
</comment>
<comment type="PTM">
    <text evidence="2 3 4">Gamma-carboxyglutamate residues are formed by vitamin K dependent carboxylation by GGCX. These residues are essential for the binding of calcium (By similarity) (PubMed:6978733). Decarboxylation promotes the hormone activity (By similarity).</text>
</comment>
<comment type="similarity">
    <text evidence="5">Belongs to the osteocalcin/matrix Gla protein family.</text>
</comment>
<sequence>YLYQWLGAPAPYPDPLEPKREVCELNPDCDELADHIGFQEAYRRFYGPV</sequence>
<keyword id="KW-0091">Biomineralization</keyword>
<keyword id="KW-0106">Calcium</keyword>
<keyword id="KW-0903">Direct protein sequencing</keyword>
<keyword id="KW-1015">Disulfide bond</keyword>
<keyword id="KW-0301">Gamma-carboxyglutamic acid</keyword>
<keyword id="KW-0372">Hormone</keyword>
<keyword id="KW-0379">Hydroxylation</keyword>
<keyword id="KW-0479">Metal-binding</keyword>
<keyword id="KW-1185">Reference proteome</keyword>
<keyword id="KW-0964">Secreted</keyword>
<feature type="chain" id="PRO_0000148901" description="Osteocalcin">
    <location>
        <begin position="1"/>
        <end position="49"/>
    </location>
</feature>
<feature type="domain" description="Gla" evidence="3">
    <location>
        <begin position="1"/>
        <end position="47"/>
    </location>
</feature>
<feature type="binding site" evidence="1">
    <location>
        <position position="17"/>
    </location>
    <ligand>
        <name>Ca(2+)</name>
        <dbReference type="ChEBI" id="CHEBI:29108"/>
        <label>1</label>
    </ligand>
</feature>
<feature type="binding site" evidence="1">
    <location>
        <position position="21"/>
    </location>
    <ligand>
        <name>Ca(2+)</name>
        <dbReference type="ChEBI" id="CHEBI:29108"/>
        <label>2</label>
    </ligand>
</feature>
<feature type="binding site" evidence="1">
    <location>
        <position position="24"/>
    </location>
    <ligand>
        <name>Ca(2+)</name>
        <dbReference type="ChEBI" id="CHEBI:29108"/>
        <label>2</label>
    </ligand>
</feature>
<feature type="binding site" evidence="1">
    <location>
        <position position="24"/>
    </location>
    <ligand>
        <name>Ca(2+)</name>
        <dbReference type="ChEBI" id="CHEBI:29108"/>
        <label>3</label>
    </ligand>
</feature>
<feature type="binding site" evidence="1">
    <location>
        <position position="30"/>
    </location>
    <ligand>
        <name>Ca(2+)</name>
        <dbReference type="ChEBI" id="CHEBI:29108"/>
        <label>3</label>
    </ligand>
</feature>
<feature type="modified residue" description="4-hydroxyproline" evidence="4">
    <location>
        <position position="9"/>
    </location>
</feature>
<feature type="modified residue" description="4-carboxyglutamate" evidence="3 4">
    <location>
        <position position="17"/>
    </location>
</feature>
<feature type="modified residue" description="4-carboxyglutamate" evidence="3 4">
    <location>
        <position position="21"/>
    </location>
</feature>
<feature type="modified residue" description="4-carboxyglutamate" evidence="3 4">
    <location>
        <position position="24"/>
    </location>
</feature>
<feature type="disulfide bond">
    <location>
        <begin position="23"/>
        <end position="29"/>
    </location>
</feature>